<sequence>MARYTGPKAKLSRREGTDLFLKSARRSLADKCKLDSKPGQHGRTSGARTSDYGNQLREKQKVKRIYGVLERQFRRYFAEADRRKGNTGENLLQLLESRLDNVVYRMGFGSTRAEARQLVSHKAILVNGQTLNVPSAQIKSGDVVTIREQSKKQVRIAEALSLAEQSGFPTWVAVDSKKFEGTFKQVPDRADISGDINESLIVELYSR</sequence>
<proteinExistence type="inferred from homology"/>
<gene>
    <name evidence="1" type="primary">rpsD</name>
    <name type="ordered locus">H16_A3459</name>
</gene>
<name>RS4_CUPNH</name>
<protein>
    <recommendedName>
        <fullName evidence="1">Small ribosomal subunit protein uS4</fullName>
    </recommendedName>
    <alternativeName>
        <fullName evidence="3">30S ribosomal protein S4</fullName>
    </alternativeName>
</protein>
<dbReference type="EMBL" id="AM260479">
    <property type="protein sequence ID" value="CAJ94527.1"/>
    <property type="molecule type" value="Genomic_DNA"/>
</dbReference>
<dbReference type="RefSeq" id="WP_010812375.1">
    <property type="nucleotide sequence ID" value="NZ_CP039287.1"/>
</dbReference>
<dbReference type="SMR" id="Q0K644"/>
<dbReference type="STRING" id="381666.H16_A3459"/>
<dbReference type="KEGG" id="reh:H16_A3459"/>
<dbReference type="eggNOG" id="COG0522">
    <property type="taxonomic scope" value="Bacteria"/>
</dbReference>
<dbReference type="HOGENOM" id="CLU_092403_0_2_4"/>
<dbReference type="OrthoDB" id="9803672at2"/>
<dbReference type="Proteomes" id="UP000008210">
    <property type="component" value="Chromosome 1"/>
</dbReference>
<dbReference type="GO" id="GO:0015935">
    <property type="term" value="C:small ribosomal subunit"/>
    <property type="evidence" value="ECO:0007669"/>
    <property type="project" value="InterPro"/>
</dbReference>
<dbReference type="GO" id="GO:0019843">
    <property type="term" value="F:rRNA binding"/>
    <property type="evidence" value="ECO:0007669"/>
    <property type="project" value="UniProtKB-UniRule"/>
</dbReference>
<dbReference type="GO" id="GO:0003735">
    <property type="term" value="F:structural constituent of ribosome"/>
    <property type="evidence" value="ECO:0007669"/>
    <property type="project" value="InterPro"/>
</dbReference>
<dbReference type="GO" id="GO:0042274">
    <property type="term" value="P:ribosomal small subunit biogenesis"/>
    <property type="evidence" value="ECO:0007669"/>
    <property type="project" value="TreeGrafter"/>
</dbReference>
<dbReference type="GO" id="GO:0006412">
    <property type="term" value="P:translation"/>
    <property type="evidence" value="ECO:0007669"/>
    <property type="project" value="UniProtKB-UniRule"/>
</dbReference>
<dbReference type="CDD" id="cd00165">
    <property type="entry name" value="S4"/>
    <property type="match status" value="1"/>
</dbReference>
<dbReference type="FunFam" id="1.10.1050.10:FF:000001">
    <property type="entry name" value="30S ribosomal protein S4"/>
    <property type="match status" value="1"/>
</dbReference>
<dbReference type="FunFam" id="3.10.290.10:FF:000001">
    <property type="entry name" value="30S ribosomal protein S4"/>
    <property type="match status" value="1"/>
</dbReference>
<dbReference type="Gene3D" id="1.10.1050.10">
    <property type="entry name" value="Ribosomal Protein S4 Delta 41, Chain A, domain 1"/>
    <property type="match status" value="1"/>
</dbReference>
<dbReference type="Gene3D" id="3.10.290.10">
    <property type="entry name" value="RNA-binding S4 domain"/>
    <property type="match status" value="1"/>
</dbReference>
<dbReference type="HAMAP" id="MF_01306_B">
    <property type="entry name" value="Ribosomal_uS4_B"/>
    <property type="match status" value="1"/>
</dbReference>
<dbReference type="InterPro" id="IPR022801">
    <property type="entry name" value="Ribosomal_uS4"/>
</dbReference>
<dbReference type="InterPro" id="IPR005709">
    <property type="entry name" value="Ribosomal_uS4_bac-type"/>
</dbReference>
<dbReference type="InterPro" id="IPR018079">
    <property type="entry name" value="Ribosomal_uS4_CS"/>
</dbReference>
<dbReference type="InterPro" id="IPR001912">
    <property type="entry name" value="Ribosomal_uS4_N"/>
</dbReference>
<dbReference type="InterPro" id="IPR002942">
    <property type="entry name" value="S4_RNA-bd"/>
</dbReference>
<dbReference type="InterPro" id="IPR036986">
    <property type="entry name" value="S4_RNA-bd_sf"/>
</dbReference>
<dbReference type="NCBIfam" id="NF003717">
    <property type="entry name" value="PRK05327.1"/>
    <property type="match status" value="1"/>
</dbReference>
<dbReference type="NCBIfam" id="TIGR01017">
    <property type="entry name" value="rpsD_bact"/>
    <property type="match status" value="1"/>
</dbReference>
<dbReference type="PANTHER" id="PTHR11831">
    <property type="entry name" value="30S 40S RIBOSOMAL PROTEIN"/>
    <property type="match status" value="1"/>
</dbReference>
<dbReference type="PANTHER" id="PTHR11831:SF4">
    <property type="entry name" value="SMALL RIBOSOMAL SUBUNIT PROTEIN US4M"/>
    <property type="match status" value="1"/>
</dbReference>
<dbReference type="Pfam" id="PF00163">
    <property type="entry name" value="Ribosomal_S4"/>
    <property type="match status" value="1"/>
</dbReference>
<dbReference type="Pfam" id="PF01479">
    <property type="entry name" value="S4"/>
    <property type="match status" value="1"/>
</dbReference>
<dbReference type="SMART" id="SM01390">
    <property type="entry name" value="Ribosomal_S4"/>
    <property type="match status" value="1"/>
</dbReference>
<dbReference type="SMART" id="SM00363">
    <property type="entry name" value="S4"/>
    <property type="match status" value="1"/>
</dbReference>
<dbReference type="SUPFAM" id="SSF55174">
    <property type="entry name" value="Alpha-L RNA-binding motif"/>
    <property type="match status" value="1"/>
</dbReference>
<dbReference type="PROSITE" id="PS00632">
    <property type="entry name" value="RIBOSOMAL_S4"/>
    <property type="match status" value="1"/>
</dbReference>
<dbReference type="PROSITE" id="PS50889">
    <property type="entry name" value="S4"/>
    <property type="match status" value="1"/>
</dbReference>
<feature type="chain" id="PRO_0000293346" description="Small ribosomal subunit protein uS4">
    <location>
        <begin position="1"/>
        <end position="207"/>
    </location>
</feature>
<feature type="domain" description="S4 RNA-binding" evidence="1">
    <location>
        <begin position="97"/>
        <end position="160"/>
    </location>
</feature>
<feature type="region of interest" description="Disordered" evidence="2">
    <location>
        <begin position="33"/>
        <end position="54"/>
    </location>
</feature>
<feature type="compositionally biased region" description="Polar residues" evidence="2">
    <location>
        <begin position="42"/>
        <end position="53"/>
    </location>
</feature>
<evidence type="ECO:0000255" key="1">
    <source>
        <dbReference type="HAMAP-Rule" id="MF_01306"/>
    </source>
</evidence>
<evidence type="ECO:0000256" key="2">
    <source>
        <dbReference type="SAM" id="MobiDB-lite"/>
    </source>
</evidence>
<evidence type="ECO:0000305" key="3"/>
<accession>Q0K644</accession>
<comment type="function">
    <text evidence="1">One of the primary rRNA binding proteins, it binds directly to 16S rRNA where it nucleates assembly of the body of the 30S subunit.</text>
</comment>
<comment type="function">
    <text evidence="1">With S5 and S12 plays an important role in translational accuracy.</text>
</comment>
<comment type="subunit">
    <text evidence="1">Part of the 30S ribosomal subunit. Contacts protein S5. The interaction surface between S4 and S5 is involved in control of translational fidelity.</text>
</comment>
<comment type="similarity">
    <text evidence="1">Belongs to the universal ribosomal protein uS4 family.</text>
</comment>
<reference key="1">
    <citation type="journal article" date="2006" name="Nat. Biotechnol.">
        <title>Genome sequence of the bioplastic-producing 'Knallgas' bacterium Ralstonia eutropha H16.</title>
        <authorList>
            <person name="Pohlmann A."/>
            <person name="Fricke W.F."/>
            <person name="Reinecke F."/>
            <person name="Kusian B."/>
            <person name="Liesegang H."/>
            <person name="Cramm R."/>
            <person name="Eitinger T."/>
            <person name="Ewering C."/>
            <person name="Poetter M."/>
            <person name="Schwartz E."/>
            <person name="Strittmatter A."/>
            <person name="Voss I."/>
            <person name="Gottschalk G."/>
            <person name="Steinbuechel A."/>
            <person name="Friedrich B."/>
            <person name="Bowien B."/>
        </authorList>
    </citation>
    <scope>NUCLEOTIDE SEQUENCE [LARGE SCALE GENOMIC DNA]</scope>
    <source>
        <strain>ATCC 17699 / DSM 428 / KCTC 22496 / NCIMB 10442 / H16 / Stanier 337</strain>
    </source>
</reference>
<organism>
    <name type="scientific">Cupriavidus necator (strain ATCC 17699 / DSM 428 / KCTC 22496 / NCIMB 10442 / H16 / Stanier 337)</name>
    <name type="common">Ralstonia eutropha</name>
    <dbReference type="NCBI Taxonomy" id="381666"/>
    <lineage>
        <taxon>Bacteria</taxon>
        <taxon>Pseudomonadati</taxon>
        <taxon>Pseudomonadota</taxon>
        <taxon>Betaproteobacteria</taxon>
        <taxon>Burkholderiales</taxon>
        <taxon>Burkholderiaceae</taxon>
        <taxon>Cupriavidus</taxon>
    </lineage>
</organism>
<keyword id="KW-1185">Reference proteome</keyword>
<keyword id="KW-0687">Ribonucleoprotein</keyword>
<keyword id="KW-0689">Ribosomal protein</keyword>
<keyword id="KW-0694">RNA-binding</keyword>
<keyword id="KW-0699">rRNA-binding</keyword>